<dbReference type="EMBL" id="AJ248283">
    <property type="protein sequence ID" value="CAB49101.1"/>
    <property type="molecule type" value="Genomic_DNA"/>
</dbReference>
<dbReference type="EMBL" id="HE613800">
    <property type="protein sequence ID" value="CCE69553.1"/>
    <property type="molecule type" value="Genomic_DNA"/>
</dbReference>
<dbReference type="PIR" id="F75206">
    <property type="entry name" value="F75206"/>
</dbReference>
<dbReference type="RefSeq" id="WP_010867301.1">
    <property type="nucleotide sequence ID" value="NC_000868.1"/>
</dbReference>
<dbReference type="SMR" id="Q9V297"/>
<dbReference type="STRING" id="272844.PAB0119"/>
<dbReference type="KEGG" id="pab:PAB0119"/>
<dbReference type="PATRIC" id="fig|272844.11.peg.191"/>
<dbReference type="eggNOG" id="arCOG00154">
    <property type="taxonomic scope" value="Archaea"/>
</dbReference>
<dbReference type="HOGENOM" id="CLU_031285_17_1_2"/>
<dbReference type="OrthoDB" id="42146at2157"/>
<dbReference type="PhylomeDB" id="Q9V297"/>
<dbReference type="Proteomes" id="UP000000810">
    <property type="component" value="Chromosome"/>
</dbReference>
<dbReference type="Proteomes" id="UP000009139">
    <property type="component" value="Chromosome"/>
</dbReference>
<dbReference type="GO" id="GO:0055052">
    <property type="term" value="C:ATP-binding cassette (ABC) transporter complex, substrate-binding subunit-containing"/>
    <property type="evidence" value="ECO:0007669"/>
    <property type="project" value="TreeGrafter"/>
</dbReference>
<dbReference type="GO" id="GO:0015144">
    <property type="term" value="F:carbohydrate transmembrane transporter activity"/>
    <property type="evidence" value="ECO:0007669"/>
    <property type="project" value="InterPro"/>
</dbReference>
<dbReference type="GO" id="GO:1901982">
    <property type="term" value="F:maltose binding"/>
    <property type="evidence" value="ECO:0007669"/>
    <property type="project" value="TreeGrafter"/>
</dbReference>
<dbReference type="GO" id="GO:0042956">
    <property type="term" value="P:maltodextrin transmembrane transport"/>
    <property type="evidence" value="ECO:0007669"/>
    <property type="project" value="TreeGrafter"/>
</dbReference>
<dbReference type="GO" id="GO:0015768">
    <property type="term" value="P:maltose transport"/>
    <property type="evidence" value="ECO:0007669"/>
    <property type="project" value="TreeGrafter"/>
</dbReference>
<dbReference type="CDD" id="cd13657">
    <property type="entry name" value="PBP2_Maltodextrin"/>
    <property type="match status" value="1"/>
</dbReference>
<dbReference type="Gene3D" id="3.40.190.10">
    <property type="entry name" value="Periplasmic binding protein-like II"/>
    <property type="match status" value="2"/>
</dbReference>
<dbReference type="InterPro" id="IPR006060">
    <property type="entry name" value="Maltose/Cyclodextrin-bd"/>
</dbReference>
<dbReference type="InterPro" id="IPR006059">
    <property type="entry name" value="SBP"/>
</dbReference>
<dbReference type="InterPro" id="IPR006061">
    <property type="entry name" value="SBP_1_CS"/>
</dbReference>
<dbReference type="PANTHER" id="PTHR30061">
    <property type="entry name" value="MALTOSE-BINDING PERIPLASMIC PROTEIN"/>
    <property type="match status" value="1"/>
</dbReference>
<dbReference type="PANTHER" id="PTHR30061:SF50">
    <property type="entry name" value="MALTOSE_MALTODEXTRIN-BINDING PERIPLASMIC PROTEIN"/>
    <property type="match status" value="1"/>
</dbReference>
<dbReference type="Pfam" id="PF01547">
    <property type="entry name" value="SBP_bac_1"/>
    <property type="match status" value="1"/>
</dbReference>
<dbReference type="PRINTS" id="PR00181">
    <property type="entry name" value="MALTOSEBP"/>
</dbReference>
<dbReference type="SUPFAM" id="SSF53850">
    <property type="entry name" value="Periplasmic binding protein-like II"/>
    <property type="match status" value="1"/>
</dbReference>
<dbReference type="PROSITE" id="PS51257">
    <property type="entry name" value="PROKAR_LIPOPROTEIN"/>
    <property type="match status" value="1"/>
</dbReference>
<dbReference type="PROSITE" id="PS01037">
    <property type="entry name" value="SBP_BACTERIAL_1"/>
    <property type="match status" value="1"/>
</dbReference>
<proteinExistence type="inferred from homology"/>
<protein>
    <recommendedName>
        <fullName>Maltotriose-binding protein</fullName>
    </recommendedName>
    <alternativeName>
        <fullName>MMBP</fullName>
    </alternativeName>
    <alternativeName>
        <fullName>Maltodextrin-binding protein</fullName>
    </alternativeName>
</protein>
<organism>
    <name type="scientific">Pyrococcus abyssi (strain GE5 / Orsay)</name>
    <dbReference type="NCBI Taxonomy" id="272844"/>
    <lineage>
        <taxon>Archaea</taxon>
        <taxon>Methanobacteriati</taxon>
        <taxon>Methanobacteriota</taxon>
        <taxon>Thermococci</taxon>
        <taxon>Thermococcales</taxon>
        <taxon>Thermococcaceae</taxon>
        <taxon>Pyrococcus</taxon>
    </lineage>
</organism>
<accession>Q9V297</accession>
<accession>G8ZG12</accession>
<keyword id="KW-0732">Signal</keyword>
<keyword id="KW-0762">Sugar transport</keyword>
<keyword id="KW-0813">Transport</keyword>
<feature type="signal peptide" evidence="2">
    <location>
        <begin position="1"/>
        <end position="29"/>
    </location>
</feature>
<feature type="chain" id="PRO_0000031700" description="Maltotriose-binding protein">
    <location>
        <begin position="30"/>
        <end position="453"/>
    </location>
</feature>
<feature type="region of interest" description="Disordered" evidence="3">
    <location>
        <begin position="27"/>
        <end position="73"/>
    </location>
</feature>
<feature type="compositionally biased region" description="Low complexity" evidence="3">
    <location>
        <begin position="27"/>
        <end position="65"/>
    </location>
</feature>
<comment type="function">
    <text evidence="1">Involved in an abc transport system for maltotriose.</text>
</comment>
<comment type="similarity">
    <text evidence="4">Belongs to the bacterial solute-binding protein 1 family.</text>
</comment>
<evidence type="ECO:0000250" key="1"/>
<evidence type="ECO:0000255" key="2">
    <source>
        <dbReference type="PROSITE-ProRule" id="PRU00303"/>
    </source>
</evidence>
<evidence type="ECO:0000256" key="3">
    <source>
        <dbReference type="SAM" id="MobiDB-lite"/>
    </source>
</evidence>
<evidence type="ECO:0000305" key="4"/>
<reference key="1">
    <citation type="journal article" date="2003" name="Mol. Microbiol.">
        <title>An integrated analysis of the genome of the hyperthermophilic archaeon Pyrococcus abyssi.</title>
        <authorList>
            <person name="Cohen G.N."/>
            <person name="Barbe V."/>
            <person name="Flament D."/>
            <person name="Galperin M."/>
            <person name="Heilig R."/>
            <person name="Lecompte O."/>
            <person name="Poch O."/>
            <person name="Prieur D."/>
            <person name="Querellou J."/>
            <person name="Ripp R."/>
            <person name="Thierry J.-C."/>
            <person name="Van der Oost J."/>
            <person name="Weissenbach J."/>
            <person name="Zivanovic Y."/>
            <person name="Forterre P."/>
        </authorList>
    </citation>
    <scope>NUCLEOTIDE SEQUENCE [LARGE SCALE GENOMIC DNA]</scope>
    <source>
        <strain>GE5 / Orsay</strain>
    </source>
</reference>
<reference key="2">
    <citation type="journal article" date="2012" name="Curr. Microbiol.">
        <title>Re-annotation of two hyperthermophilic archaea Pyrococcus abyssi GE5 and Pyrococcus furiosus DSM 3638.</title>
        <authorList>
            <person name="Gao J."/>
            <person name="Wang J."/>
        </authorList>
    </citation>
    <scope>GENOME REANNOTATION</scope>
    <source>
        <strain>GE5 / Orsay</strain>
    </source>
</reference>
<sequence length="453" mass="50597">MKRGIYAVLLVGVLIFSVVASGCIGGTQTQTETQTPEKTQTPTTTQPSPTTTTSPTQTTSQTPTETETHTQEAECGSGKVVIWHNMQPNELQVFQSLAEEYMAMCPDVEIVFEQKPDLENALKVAIPAGQGPDLFIWAHDWIGKFAEAGLLEPIDEYITDDLLQKFAPMAREAIEYKGHYYALPFAAETVAMIYNKKIVSEPPKTFDELKEVMEKYYDPNNEKYGIAWPINAYFISAIAQAFGGYYFDDKTEQPGLDKPETIEGFKFFFENIWPYMAPTADYNTQQSIFLEGRAPIMVNGPWSIGSVKDAGIDFGVAPLPPIIKDGKEYWPRPYGGVKLIYFAAGTHNKDAAWKFVKWFTTNPEVIKQLALDLGYIPVLSEVLNDPEIKNDPVIYGFGQAVQHAYLMPKSPKMGAVWGGVQGAIDEILKDPKHADIEAILKKYQEEILKNMQG</sequence>
<gene>
    <name type="primary">malE</name>
    <name type="ordered locus">PYRAB01770</name>
    <name type="ORF">PAB0119</name>
</gene>
<name>MALE_PYRAB</name>